<evidence type="ECO:0000255" key="1">
    <source>
        <dbReference type="HAMAP-Rule" id="MF_01710"/>
    </source>
</evidence>
<feature type="chain" id="PRO_0000091978" description="Energy-coupling factor transporter ATP-binding protein EcfA2">
    <location>
        <begin position="1"/>
        <end position="293"/>
    </location>
</feature>
<feature type="domain" description="ABC transporter" evidence="1">
    <location>
        <begin position="3"/>
        <end position="246"/>
    </location>
</feature>
<feature type="binding site" evidence="1">
    <location>
        <begin position="40"/>
        <end position="47"/>
    </location>
    <ligand>
        <name>ATP</name>
        <dbReference type="ChEBI" id="CHEBI:30616"/>
    </ligand>
</feature>
<accession>Q81J15</accession>
<dbReference type="EC" id="7.-.-.-" evidence="1"/>
<dbReference type="EMBL" id="AE016877">
    <property type="protein sequence ID" value="AAP07241.1"/>
    <property type="molecule type" value="Genomic_DNA"/>
</dbReference>
<dbReference type="RefSeq" id="NP_830040.1">
    <property type="nucleotide sequence ID" value="NC_004722.1"/>
</dbReference>
<dbReference type="RefSeq" id="WP_000406535.1">
    <property type="nucleotide sequence ID" value="NZ_CP138336.1"/>
</dbReference>
<dbReference type="SMR" id="Q81J15"/>
<dbReference type="STRING" id="226900.BC_0161"/>
<dbReference type="KEGG" id="bce:BC0161"/>
<dbReference type="PATRIC" id="fig|226900.8.peg.163"/>
<dbReference type="HOGENOM" id="CLU_000604_1_22_9"/>
<dbReference type="OrthoDB" id="9784332at2"/>
<dbReference type="Proteomes" id="UP000001417">
    <property type="component" value="Chromosome"/>
</dbReference>
<dbReference type="GO" id="GO:0043190">
    <property type="term" value="C:ATP-binding cassette (ABC) transporter complex"/>
    <property type="evidence" value="ECO:0000318"/>
    <property type="project" value="GO_Central"/>
</dbReference>
<dbReference type="GO" id="GO:0005524">
    <property type="term" value="F:ATP binding"/>
    <property type="evidence" value="ECO:0000318"/>
    <property type="project" value="GO_Central"/>
</dbReference>
<dbReference type="GO" id="GO:0016887">
    <property type="term" value="F:ATP hydrolysis activity"/>
    <property type="evidence" value="ECO:0007669"/>
    <property type="project" value="InterPro"/>
</dbReference>
<dbReference type="GO" id="GO:0042626">
    <property type="term" value="F:ATPase-coupled transmembrane transporter activity"/>
    <property type="evidence" value="ECO:0000318"/>
    <property type="project" value="GO_Central"/>
</dbReference>
<dbReference type="CDD" id="cd03225">
    <property type="entry name" value="ABC_cobalt_CbiO_domain1"/>
    <property type="match status" value="1"/>
</dbReference>
<dbReference type="FunFam" id="3.40.50.300:FF:000224">
    <property type="entry name" value="Energy-coupling factor transporter ATP-binding protein EcfA"/>
    <property type="match status" value="1"/>
</dbReference>
<dbReference type="Gene3D" id="3.40.50.300">
    <property type="entry name" value="P-loop containing nucleotide triphosphate hydrolases"/>
    <property type="match status" value="1"/>
</dbReference>
<dbReference type="InterPro" id="IPR003593">
    <property type="entry name" value="AAA+_ATPase"/>
</dbReference>
<dbReference type="InterPro" id="IPR003439">
    <property type="entry name" value="ABC_transporter-like_ATP-bd"/>
</dbReference>
<dbReference type="InterPro" id="IPR017871">
    <property type="entry name" value="ABC_transporter-like_CS"/>
</dbReference>
<dbReference type="InterPro" id="IPR015856">
    <property type="entry name" value="ABC_transpr_CbiO/EcfA_su"/>
</dbReference>
<dbReference type="InterPro" id="IPR050095">
    <property type="entry name" value="ECF_ABC_transporter_ATP-bd"/>
</dbReference>
<dbReference type="InterPro" id="IPR030946">
    <property type="entry name" value="EcfA2"/>
</dbReference>
<dbReference type="InterPro" id="IPR027417">
    <property type="entry name" value="P-loop_NTPase"/>
</dbReference>
<dbReference type="NCBIfam" id="TIGR04521">
    <property type="entry name" value="ECF_ATPase_2"/>
    <property type="match status" value="1"/>
</dbReference>
<dbReference type="NCBIfam" id="NF010155">
    <property type="entry name" value="PRK13634.1"/>
    <property type="match status" value="1"/>
</dbReference>
<dbReference type="PANTHER" id="PTHR43553:SF27">
    <property type="entry name" value="ENERGY-COUPLING FACTOR TRANSPORTER ATP-BINDING PROTEIN ECFA2"/>
    <property type="match status" value="1"/>
</dbReference>
<dbReference type="PANTHER" id="PTHR43553">
    <property type="entry name" value="HEAVY METAL TRANSPORTER"/>
    <property type="match status" value="1"/>
</dbReference>
<dbReference type="Pfam" id="PF00005">
    <property type="entry name" value="ABC_tran"/>
    <property type="match status" value="1"/>
</dbReference>
<dbReference type="SMART" id="SM00382">
    <property type="entry name" value="AAA"/>
    <property type="match status" value="1"/>
</dbReference>
<dbReference type="SUPFAM" id="SSF52540">
    <property type="entry name" value="P-loop containing nucleoside triphosphate hydrolases"/>
    <property type="match status" value="1"/>
</dbReference>
<dbReference type="PROSITE" id="PS00211">
    <property type="entry name" value="ABC_TRANSPORTER_1"/>
    <property type="match status" value="1"/>
</dbReference>
<dbReference type="PROSITE" id="PS50893">
    <property type="entry name" value="ABC_TRANSPORTER_2"/>
    <property type="match status" value="1"/>
</dbReference>
<dbReference type="PROSITE" id="PS51246">
    <property type="entry name" value="CBIO"/>
    <property type="match status" value="1"/>
</dbReference>
<gene>
    <name evidence="1" type="primary">ecfA2</name>
    <name type="synonym">cbiO2</name>
    <name type="ordered locus">BC_0161</name>
</gene>
<sequence length="293" mass="32709">MEITFQKVEHRYQYKTPFERRALYDVDVSFPSGGYYAIIGHTGSGKSTMIQHLNGLLQPTNGTVQIGEHLISAGKKEKKLKPLRKKVGVVFQFPEHQLFEETVEKDICFGPTNFGVSVDEARQKARKAIELVGLEPELLTRSPFELSGGQMRRVAIAGVLAMEPEVLVLDEPTAGLDPKGQNELMEMFYKLHKEKGLTVILVTHNMEDAAQYAEQIVVMHKGTVFLQGSAEEVFSHADELEKIGVDLPMSLKYKRAIEEKFGISIPKATLSLEDLTHEVVQVLRKGGHESCSS</sequence>
<proteinExistence type="inferred from homology"/>
<protein>
    <recommendedName>
        <fullName evidence="1">Energy-coupling factor transporter ATP-binding protein EcfA2</fullName>
        <shortName evidence="1">ECF transporter A component EcfA2</shortName>
        <ecNumber evidence="1">7.-.-.-</ecNumber>
    </recommendedName>
</protein>
<name>ECFA2_BACCR</name>
<reference key="1">
    <citation type="journal article" date="2003" name="Nature">
        <title>Genome sequence of Bacillus cereus and comparative analysis with Bacillus anthracis.</title>
        <authorList>
            <person name="Ivanova N."/>
            <person name="Sorokin A."/>
            <person name="Anderson I."/>
            <person name="Galleron N."/>
            <person name="Candelon B."/>
            <person name="Kapatral V."/>
            <person name="Bhattacharyya A."/>
            <person name="Reznik G."/>
            <person name="Mikhailova N."/>
            <person name="Lapidus A."/>
            <person name="Chu L."/>
            <person name="Mazur M."/>
            <person name="Goltsman E."/>
            <person name="Larsen N."/>
            <person name="D'Souza M."/>
            <person name="Walunas T."/>
            <person name="Grechkin Y."/>
            <person name="Pusch G."/>
            <person name="Haselkorn R."/>
            <person name="Fonstein M."/>
            <person name="Ehrlich S.D."/>
            <person name="Overbeek R."/>
            <person name="Kyrpides N.C."/>
        </authorList>
    </citation>
    <scope>NUCLEOTIDE SEQUENCE [LARGE SCALE GENOMIC DNA]</scope>
    <source>
        <strain>ATCC 14579 / DSM 31 / CCUG 7414 / JCM 2152 / NBRC 15305 / NCIMB 9373 / NCTC 2599 / NRRL B-3711</strain>
    </source>
</reference>
<comment type="function">
    <text evidence="1">ATP-binding (A) component of a common energy-coupling factor (ECF) ABC-transporter complex. Unlike classic ABC transporters this ECF transporter provides the energy necessary to transport a number of different substrates.</text>
</comment>
<comment type="subunit">
    <text evidence="1">Forms a stable energy-coupling factor (ECF) transporter complex composed of 2 membrane-embedded substrate-binding proteins (S component), 2 ATP-binding proteins (A component) and 2 transmembrane proteins (T component).</text>
</comment>
<comment type="subcellular location">
    <subcellularLocation>
        <location evidence="1">Cell membrane</location>
        <topology evidence="1">Peripheral membrane protein</topology>
    </subcellularLocation>
</comment>
<comment type="similarity">
    <text evidence="1">Belongs to the ABC transporter superfamily. Energy-coupling factor EcfA family.</text>
</comment>
<organism>
    <name type="scientific">Bacillus cereus (strain ATCC 14579 / DSM 31 / CCUG 7414 / JCM 2152 / NBRC 15305 / NCIMB 9373 / NCTC 2599 / NRRL B-3711)</name>
    <dbReference type="NCBI Taxonomy" id="226900"/>
    <lineage>
        <taxon>Bacteria</taxon>
        <taxon>Bacillati</taxon>
        <taxon>Bacillota</taxon>
        <taxon>Bacilli</taxon>
        <taxon>Bacillales</taxon>
        <taxon>Bacillaceae</taxon>
        <taxon>Bacillus</taxon>
        <taxon>Bacillus cereus group</taxon>
    </lineage>
</organism>
<keyword id="KW-0067">ATP-binding</keyword>
<keyword id="KW-1003">Cell membrane</keyword>
<keyword id="KW-0472">Membrane</keyword>
<keyword id="KW-0547">Nucleotide-binding</keyword>
<keyword id="KW-1185">Reference proteome</keyword>
<keyword id="KW-1278">Translocase</keyword>
<keyword id="KW-0813">Transport</keyword>